<reference key="1">
    <citation type="journal article" date="2007" name="Genome Biol.">
        <title>Comparison of Francisella tularensis genomes reveals evolutionary events associated with the emergence of human pathogenic strains.</title>
        <authorList>
            <person name="Rohmer L."/>
            <person name="Fong C."/>
            <person name="Abmayr S."/>
            <person name="Wasnick M."/>
            <person name="Larson Freeman T.J."/>
            <person name="Radey M."/>
            <person name="Guina T."/>
            <person name="Svensson K."/>
            <person name="Hayden H.S."/>
            <person name="Jacobs M."/>
            <person name="Gallagher L.A."/>
            <person name="Manoil C."/>
            <person name="Ernst R.K."/>
            <person name="Drees B."/>
            <person name="Buckley D."/>
            <person name="Haugen E."/>
            <person name="Bovee D."/>
            <person name="Zhou Y."/>
            <person name="Chang J."/>
            <person name="Levy R."/>
            <person name="Lim R."/>
            <person name="Gillett W."/>
            <person name="Guenthener D."/>
            <person name="Kang A."/>
            <person name="Shaffer S.A."/>
            <person name="Taylor G."/>
            <person name="Chen J."/>
            <person name="Gallis B."/>
            <person name="D'Argenio D.A."/>
            <person name="Forsman M."/>
            <person name="Olson M.V."/>
            <person name="Goodlett D.R."/>
            <person name="Kaul R."/>
            <person name="Miller S.I."/>
            <person name="Brittnacher M.J."/>
        </authorList>
    </citation>
    <scope>NUCLEOTIDE SEQUENCE [LARGE SCALE GENOMIC DNA]</scope>
    <source>
        <strain>U112</strain>
    </source>
</reference>
<keyword id="KW-0004">4Fe-4S</keyword>
<keyword id="KW-0067">ATP-binding</keyword>
<keyword id="KW-0963">Cytoplasm</keyword>
<keyword id="KW-0408">Iron</keyword>
<keyword id="KW-0411">Iron-sulfur</keyword>
<keyword id="KW-0460">Magnesium</keyword>
<keyword id="KW-0479">Metal-binding</keyword>
<keyword id="KW-0547">Nucleotide-binding</keyword>
<keyword id="KW-0694">RNA-binding</keyword>
<keyword id="KW-0808">Transferase</keyword>
<keyword id="KW-0819">tRNA processing</keyword>
<keyword id="KW-0820">tRNA-binding</keyword>
<gene>
    <name evidence="1" type="primary">ttcA2</name>
    <name type="ordered locus">FTN_1165</name>
</gene>
<organism>
    <name type="scientific">Francisella tularensis subsp. novicida (strain U112)</name>
    <dbReference type="NCBI Taxonomy" id="401614"/>
    <lineage>
        <taxon>Bacteria</taxon>
        <taxon>Pseudomonadati</taxon>
        <taxon>Pseudomonadota</taxon>
        <taxon>Gammaproteobacteria</taxon>
        <taxon>Thiotrichales</taxon>
        <taxon>Francisellaceae</taxon>
        <taxon>Francisella</taxon>
    </lineage>
</organism>
<dbReference type="EC" id="2.8.1.-" evidence="1"/>
<dbReference type="EMBL" id="CP000439">
    <property type="protein sequence ID" value="ABK90051.1"/>
    <property type="molecule type" value="Genomic_DNA"/>
</dbReference>
<dbReference type="SMR" id="A0Q736"/>
<dbReference type="KEGG" id="ftn:FTN_1165"/>
<dbReference type="KEGG" id="ftx:AW25_842"/>
<dbReference type="BioCyc" id="FTUL401614:G1G75-1208-MONOMER"/>
<dbReference type="Proteomes" id="UP000000762">
    <property type="component" value="Chromosome"/>
</dbReference>
<dbReference type="GO" id="GO:0005737">
    <property type="term" value="C:cytoplasm"/>
    <property type="evidence" value="ECO:0007669"/>
    <property type="project" value="UniProtKB-SubCell"/>
</dbReference>
<dbReference type="GO" id="GO:0051539">
    <property type="term" value="F:4 iron, 4 sulfur cluster binding"/>
    <property type="evidence" value="ECO:0007669"/>
    <property type="project" value="UniProtKB-UniRule"/>
</dbReference>
<dbReference type="GO" id="GO:0005524">
    <property type="term" value="F:ATP binding"/>
    <property type="evidence" value="ECO:0007669"/>
    <property type="project" value="UniProtKB-UniRule"/>
</dbReference>
<dbReference type="GO" id="GO:0000287">
    <property type="term" value="F:magnesium ion binding"/>
    <property type="evidence" value="ECO:0007669"/>
    <property type="project" value="UniProtKB-UniRule"/>
</dbReference>
<dbReference type="GO" id="GO:0016783">
    <property type="term" value="F:sulfurtransferase activity"/>
    <property type="evidence" value="ECO:0007669"/>
    <property type="project" value="UniProtKB-UniRule"/>
</dbReference>
<dbReference type="GO" id="GO:0000049">
    <property type="term" value="F:tRNA binding"/>
    <property type="evidence" value="ECO:0007669"/>
    <property type="project" value="UniProtKB-KW"/>
</dbReference>
<dbReference type="GO" id="GO:0034227">
    <property type="term" value="P:tRNA thio-modification"/>
    <property type="evidence" value="ECO:0007669"/>
    <property type="project" value="UniProtKB-UniRule"/>
</dbReference>
<dbReference type="CDD" id="cd24138">
    <property type="entry name" value="TtcA-like"/>
    <property type="match status" value="1"/>
</dbReference>
<dbReference type="Gene3D" id="3.40.50.620">
    <property type="entry name" value="HUPs"/>
    <property type="match status" value="1"/>
</dbReference>
<dbReference type="HAMAP" id="MF_01850">
    <property type="entry name" value="TtcA"/>
    <property type="match status" value="1"/>
</dbReference>
<dbReference type="InterPro" id="IPR014729">
    <property type="entry name" value="Rossmann-like_a/b/a_fold"/>
</dbReference>
<dbReference type="InterPro" id="IPR011063">
    <property type="entry name" value="TilS/TtcA_N"/>
</dbReference>
<dbReference type="InterPro" id="IPR012089">
    <property type="entry name" value="tRNA_Cyd_32_2_STrfase"/>
</dbReference>
<dbReference type="InterPro" id="IPR035107">
    <property type="entry name" value="tRNA_thiolation_TtcA_Ctu1"/>
</dbReference>
<dbReference type="NCBIfam" id="NF007972">
    <property type="entry name" value="PRK10696.1"/>
    <property type="match status" value="1"/>
</dbReference>
<dbReference type="PANTHER" id="PTHR43686:SF1">
    <property type="entry name" value="AMINOTRAN_5 DOMAIN-CONTAINING PROTEIN"/>
    <property type="match status" value="1"/>
</dbReference>
<dbReference type="PANTHER" id="PTHR43686">
    <property type="entry name" value="SULFURTRANSFERASE-RELATED"/>
    <property type="match status" value="1"/>
</dbReference>
<dbReference type="Pfam" id="PF01171">
    <property type="entry name" value="ATP_bind_3"/>
    <property type="match status" value="1"/>
</dbReference>
<dbReference type="PIRSF" id="PIRSF004976">
    <property type="entry name" value="ATPase_YdaO"/>
    <property type="match status" value="1"/>
</dbReference>
<dbReference type="SUPFAM" id="SSF52402">
    <property type="entry name" value="Adenine nucleotide alpha hydrolases-like"/>
    <property type="match status" value="1"/>
</dbReference>
<name>TTCA2_FRATN</name>
<feature type="chain" id="PRO_0000348737" description="tRNA-cytidine(32) 2-sulfurtransferase 2">
    <location>
        <begin position="1"/>
        <end position="253"/>
    </location>
</feature>
<feature type="short sequence motif" description="PP-loop motif" evidence="1">
    <location>
        <begin position="33"/>
        <end position="38"/>
    </location>
</feature>
<feature type="binding site" evidence="1">
    <location>
        <position position="108"/>
    </location>
    <ligand>
        <name>[4Fe-4S] cluster</name>
        <dbReference type="ChEBI" id="CHEBI:49883"/>
    </ligand>
</feature>
<feature type="binding site" evidence="1">
    <location>
        <position position="111"/>
    </location>
    <ligand>
        <name>[4Fe-4S] cluster</name>
        <dbReference type="ChEBI" id="CHEBI:49883"/>
    </ligand>
</feature>
<feature type="binding site" evidence="1">
    <location>
        <position position="199"/>
    </location>
    <ligand>
        <name>[4Fe-4S] cluster</name>
        <dbReference type="ChEBI" id="CHEBI:49883"/>
    </ligand>
</feature>
<accession>A0Q736</accession>
<proteinExistence type="inferred from homology"/>
<sequence length="253" mass="29055">MTKTEKKLRHYITKAIADYKLLDKGDKVMLCLSGGKDSFGLLKVLHGLIEDKTYDIDLHVYTLDQSQPGWDDSQLRKYLDDLGVSYEIETKNTYGVVIDKVPEGKTYCSLCSRLRRGNIYRYAKEHKMDKIILGHHRDDLIQSLLMSILYQGQIKSMPPKFVTQDGENTVIRPMVLVQERDLIEFAKEENFPIIPCNLCGSQENLKRKKVKKLIQDLALENPKVPSNILNSLSNVLPSHLMDRNLFDIDATIK</sequence>
<comment type="function">
    <text evidence="1">Catalyzes the ATP-dependent 2-thiolation of cytidine in position 32 of tRNA, to form 2-thiocytidine (s(2)C32). The sulfur atoms are provided by the cysteine/cysteine desulfurase (IscS) system.</text>
</comment>
<comment type="catalytic activity">
    <reaction evidence="1">
        <text>cytidine(32) in tRNA + S-sulfanyl-L-cysteinyl-[cysteine desulfurase] + AH2 + ATP = 2-thiocytidine(32) in tRNA + L-cysteinyl-[cysteine desulfurase] + A + AMP + diphosphate + H(+)</text>
        <dbReference type="Rhea" id="RHEA:57048"/>
        <dbReference type="Rhea" id="RHEA-COMP:10288"/>
        <dbReference type="Rhea" id="RHEA-COMP:12157"/>
        <dbReference type="Rhea" id="RHEA-COMP:12158"/>
        <dbReference type="Rhea" id="RHEA-COMP:14821"/>
        <dbReference type="ChEBI" id="CHEBI:13193"/>
        <dbReference type="ChEBI" id="CHEBI:15378"/>
        <dbReference type="ChEBI" id="CHEBI:17499"/>
        <dbReference type="ChEBI" id="CHEBI:29950"/>
        <dbReference type="ChEBI" id="CHEBI:30616"/>
        <dbReference type="ChEBI" id="CHEBI:33019"/>
        <dbReference type="ChEBI" id="CHEBI:61963"/>
        <dbReference type="ChEBI" id="CHEBI:82748"/>
        <dbReference type="ChEBI" id="CHEBI:141453"/>
        <dbReference type="ChEBI" id="CHEBI:456215"/>
    </reaction>
    <physiologicalReaction direction="left-to-right" evidence="1">
        <dbReference type="Rhea" id="RHEA:57049"/>
    </physiologicalReaction>
</comment>
<comment type="cofactor">
    <cofactor evidence="1">
        <name>Mg(2+)</name>
        <dbReference type="ChEBI" id="CHEBI:18420"/>
    </cofactor>
</comment>
<comment type="cofactor">
    <cofactor evidence="1">
        <name>[4Fe-4S] cluster</name>
        <dbReference type="ChEBI" id="CHEBI:49883"/>
    </cofactor>
    <text evidence="1">Binds 1 [4Fe-4S] cluster per subunit. The cluster is chelated by three Cys residues, the fourth Fe has a free coordination site that may bind a sulfur atom transferred from the persulfide of IscS.</text>
</comment>
<comment type="pathway">
    <text evidence="1">tRNA modification.</text>
</comment>
<comment type="subunit">
    <text evidence="1">Homodimer.</text>
</comment>
<comment type="subcellular location">
    <subcellularLocation>
        <location evidence="1">Cytoplasm</location>
    </subcellularLocation>
</comment>
<comment type="miscellaneous">
    <text evidence="1">The thiolation reaction likely consists of two steps: a first activation step by ATP to form an adenylated intermediate of the target base of tRNA, and a second nucleophilic substitution step of the sulfur (S) atom supplied by the hydrosulfide attached to the Fe-S cluster.</text>
</comment>
<comment type="similarity">
    <text evidence="1">Belongs to the TtcA family.</text>
</comment>
<evidence type="ECO:0000255" key="1">
    <source>
        <dbReference type="HAMAP-Rule" id="MF_01850"/>
    </source>
</evidence>
<protein>
    <recommendedName>
        <fullName evidence="1">tRNA-cytidine(32) 2-sulfurtransferase 2</fullName>
        <ecNumber evidence="1">2.8.1.-</ecNumber>
    </recommendedName>
    <alternativeName>
        <fullName evidence="1">Two-thiocytidine biosynthesis protein A 2</fullName>
    </alternativeName>
    <alternativeName>
        <fullName evidence="1">tRNA 2-thiocytidine biosynthesis protein TtcA 2</fullName>
    </alternativeName>
</protein>